<organism>
    <name type="scientific">Burkholderia orbicola (strain AU 1054)</name>
    <dbReference type="NCBI Taxonomy" id="331271"/>
    <lineage>
        <taxon>Bacteria</taxon>
        <taxon>Pseudomonadati</taxon>
        <taxon>Pseudomonadota</taxon>
        <taxon>Betaproteobacteria</taxon>
        <taxon>Burkholderiales</taxon>
        <taxon>Burkholderiaceae</taxon>
        <taxon>Burkholderia</taxon>
        <taxon>Burkholderia cepacia complex</taxon>
        <taxon>Burkholderia orbicola</taxon>
    </lineage>
</organism>
<dbReference type="EC" id="5.1.3.32" evidence="1"/>
<dbReference type="EMBL" id="CP000380">
    <property type="protein sequence ID" value="ABF81263.1"/>
    <property type="molecule type" value="Genomic_DNA"/>
</dbReference>
<dbReference type="SMR" id="Q1BGJ2"/>
<dbReference type="HOGENOM" id="CLU_100689_2_0_4"/>
<dbReference type="UniPathway" id="UPA00125"/>
<dbReference type="GO" id="GO:0005737">
    <property type="term" value="C:cytoplasm"/>
    <property type="evidence" value="ECO:0007669"/>
    <property type="project" value="UniProtKB-SubCell"/>
</dbReference>
<dbReference type="GO" id="GO:0062192">
    <property type="term" value="F:L-rhamnose mutarotase activity"/>
    <property type="evidence" value="ECO:0007669"/>
    <property type="project" value="UniProtKB-EC"/>
</dbReference>
<dbReference type="GO" id="GO:0019301">
    <property type="term" value="P:rhamnose catabolic process"/>
    <property type="evidence" value="ECO:0007669"/>
    <property type="project" value="TreeGrafter"/>
</dbReference>
<dbReference type="Gene3D" id="3.30.70.100">
    <property type="match status" value="1"/>
</dbReference>
<dbReference type="HAMAP" id="MF_01663">
    <property type="entry name" value="L_rham_rotase"/>
    <property type="match status" value="1"/>
</dbReference>
<dbReference type="InterPro" id="IPR011008">
    <property type="entry name" value="Dimeric_a/b-barrel"/>
</dbReference>
<dbReference type="InterPro" id="IPR013448">
    <property type="entry name" value="L-rhamnose_mutarotase"/>
</dbReference>
<dbReference type="InterPro" id="IPR008000">
    <property type="entry name" value="Rham/fucose_mutarotase"/>
</dbReference>
<dbReference type="NCBIfam" id="TIGR02625">
    <property type="entry name" value="YiiL_rotase"/>
    <property type="match status" value="1"/>
</dbReference>
<dbReference type="PANTHER" id="PTHR34389">
    <property type="entry name" value="L-RHAMNOSE MUTAROTASE"/>
    <property type="match status" value="1"/>
</dbReference>
<dbReference type="PANTHER" id="PTHR34389:SF2">
    <property type="entry name" value="L-RHAMNOSE MUTAROTASE"/>
    <property type="match status" value="1"/>
</dbReference>
<dbReference type="Pfam" id="PF05336">
    <property type="entry name" value="rhaM"/>
    <property type="match status" value="1"/>
</dbReference>
<dbReference type="SUPFAM" id="SSF54909">
    <property type="entry name" value="Dimeric alpha+beta barrel"/>
    <property type="match status" value="1"/>
</dbReference>
<feature type="chain" id="PRO_0000344557" description="L-rhamnose mutarotase">
    <location>
        <begin position="1"/>
        <end position="104"/>
    </location>
</feature>
<feature type="active site" description="Proton donor" evidence="1">
    <location>
        <position position="22"/>
    </location>
</feature>
<feature type="binding site" evidence="1">
    <location>
        <position position="18"/>
    </location>
    <ligand>
        <name>substrate</name>
    </ligand>
</feature>
<feature type="binding site" evidence="1">
    <location>
        <position position="41"/>
    </location>
    <ligand>
        <name>substrate</name>
    </ligand>
</feature>
<feature type="binding site" evidence="1">
    <location>
        <begin position="76"/>
        <end position="77"/>
    </location>
    <ligand>
        <name>substrate</name>
    </ligand>
</feature>
<reference key="1">
    <citation type="submission" date="2006-05" db="EMBL/GenBank/DDBJ databases">
        <title>Complete sequence of chromosome 3 of Burkholderia cenocepacia AU 1054.</title>
        <authorList>
            <consortium name="US DOE Joint Genome Institute"/>
            <person name="Copeland A."/>
            <person name="Lucas S."/>
            <person name="Lapidus A."/>
            <person name="Barry K."/>
            <person name="Detter J.C."/>
            <person name="Glavina del Rio T."/>
            <person name="Hammon N."/>
            <person name="Israni S."/>
            <person name="Dalin E."/>
            <person name="Tice H."/>
            <person name="Pitluck S."/>
            <person name="Chain P."/>
            <person name="Malfatti S."/>
            <person name="Shin M."/>
            <person name="Vergez L."/>
            <person name="Schmutz J."/>
            <person name="Larimer F."/>
            <person name="Land M."/>
            <person name="Hauser L."/>
            <person name="Kyrpides N."/>
            <person name="Lykidis A."/>
            <person name="LiPuma J.J."/>
            <person name="Konstantinidis K."/>
            <person name="Tiedje J.M."/>
            <person name="Richardson P."/>
        </authorList>
    </citation>
    <scope>NUCLEOTIDE SEQUENCE [LARGE SCALE GENOMIC DNA]</scope>
    <source>
        <strain>AU 1054</strain>
    </source>
</reference>
<proteinExistence type="inferred from homology"/>
<gene>
    <name evidence="1" type="primary">rhaM</name>
    <name type="ordered locus">Bcen_6401</name>
</gene>
<keyword id="KW-0119">Carbohydrate metabolism</keyword>
<keyword id="KW-0963">Cytoplasm</keyword>
<keyword id="KW-0413">Isomerase</keyword>
<keyword id="KW-0684">Rhamnose metabolism</keyword>
<name>RHAM_BURO1</name>
<evidence type="ECO:0000255" key="1">
    <source>
        <dbReference type="HAMAP-Rule" id="MF_01663"/>
    </source>
</evidence>
<accession>Q1BGJ2</accession>
<sequence length="104" mass="12281">METIAFRMHLHPGKRDEYRRRHDAIWPELADALRAAGISDYWIFLDDDTHHLFAVLKRPADHRIAQLAETDVMRRWWAYMADLMATGPDGRPVEKALEPMFHLE</sequence>
<comment type="function">
    <text evidence="1">Involved in the anomeric conversion of L-rhamnose.</text>
</comment>
<comment type="catalytic activity">
    <reaction evidence="1">
        <text>alpha-L-rhamnose = beta-L-rhamnose</text>
        <dbReference type="Rhea" id="RHEA:25584"/>
        <dbReference type="ChEBI" id="CHEBI:27586"/>
        <dbReference type="ChEBI" id="CHEBI:27907"/>
        <dbReference type="EC" id="5.1.3.32"/>
    </reaction>
</comment>
<comment type="pathway">
    <text evidence="1">Carbohydrate metabolism; L-rhamnose metabolism.</text>
</comment>
<comment type="subunit">
    <text evidence="1">Homodimer.</text>
</comment>
<comment type="subcellular location">
    <subcellularLocation>
        <location evidence="1">Cytoplasm</location>
    </subcellularLocation>
</comment>
<comment type="similarity">
    <text evidence="1">Belongs to the rhamnose mutarotase family.</text>
</comment>
<protein>
    <recommendedName>
        <fullName evidence="1">L-rhamnose mutarotase</fullName>
        <ecNumber evidence="1">5.1.3.32</ecNumber>
    </recommendedName>
    <alternativeName>
        <fullName evidence="1">Rhamnose 1-epimerase</fullName>
    </alternativeName>
    <alternativeName>
        <fullName evidence="1">Type-3 mutarotase</fullName>
    </alternativeName>
</protein>